<feature type="chain" id="PRO_1000134654" description="Small ribosomal subunit protein uS12">
    <location>
        <begin position="1"/>
        <end position="137"/>
    </location>
</feature>
<feature type="region of interest" description="Disordered" evidence="3">
    <location>
        <begin position="1"/>
        <end position="28"/>
    </location>
</feature>
<feature type="modified residue" description="3-methylthioaspartic acid" evidence="1">
    <location>
        <position position="102"/>
    </location>
</feature>
<sequence>MPTINQLVRKPRKSKAKKSDSPALNKGFNSMKKQFTDLNSPQKRGVCTRVGTMTPKKPNSALRKYARVRLSNNIEINAYIPGIGHNLQEHSVVLVRGGRVKDLPGVRYHIVRGALDTSGVEGRMQSRSLYGTKRPKK</sequence>
<proteinExistence type="inferred from homology"/>
<evidence type="ECO:0000250" key="1"/>
<evidence type="ECO:0000255" key="2">
    <source>
        <dbReference type="HAMAP-Rule" id="MF_00403"/>
    </source>
</evidence>
<evidence type="ECO:0000256" key="3">
    <source>
        <dbReference type="SAM" id="MobiDB-lite"/>
    </source>
</evidence>
<evidence type="ECO:0000305" key="4"/>
<comment type="function">
    <text evidence="2">With S4 and S5 plays an important role in translational accuracy.</text>
</comment>
<comment type="function">
    <text evidence="2">Interacts with and stabilizes bases of the 16S rRNA that are involved in tRNA selection in the A site and with the mRNA backbone. Located at the interface of the 30S and 50S subunits, it traverses the body of the 30S subunit contacting proteins on the other side and probably holding the rRNA structure together. The combined cluster of proteins S8, S12 and S17 appears to hold together the shoulder and platform of the 30S subunit.</text>
</comment>
<comment type="subunit">
    <text evidence="2">Part of the 30S ribosomal subunit. Contacts proteins S8 and S17. May interact with IF1 in the 30S initiation complex.</text>
</comment>
<comment type="similarity">
    <text evidence="2">Belongs to the universal ribosomal protein uS12 family.</text>
</comment>
<gene>
    <name evidence="2" type="primary">rpsL</name>
    <name type="ordered locus">Sca_0204</name>
</gene>
<organism>
    <name type="scientific">Staphylococcus carnosus (strain TM300)</name>
    <dbReference type="NCBI Taxonomy" id="396513"/>
    <lineage>
        <taxon>Bacteria</taxon>
        <taxon>Bacillati</taxon>
        <taxon>Bacillota</taxon>
        <taxon>Bacilli</taxon>
        <taxon>Bacillales</taxon>
        <taxon>Staphylococcaceae</taxon>
        <taxon>Staphylococcus</taxon>
    </lineage>
</organism>
<reference key="1">
    <citation type="journal article" date="2009" name="Appl. Environ. Microbiol.">
        <title>Genome analysis of the meat starter culture bacterium Staphylococcus carnosus TM300.</title>
        <authorList>
            <person name="Rosenstein R."/>
            <person name="Nerz C."/>
            <person name="Biswas L."/>
            <person name="Resch A."/>
            <person name="Raddatz G."/>
            <person name="Schuster S.C."/>
            <person name="Goetz F."/>
        </authorList>
    </citation>
    <scope>NUCLEOTIDE SEQUENCE [LARGE SCALE GENOMIC DNA]</scope>
    <source>
        <strain>TM300</strain>
    </source>
</reference>
<name>RS12_STACT</name>
<keyword id="KW-0488">Methylation</keyword>
<keyword id="KW-1185">Reference proteome</keyword>
<keyword id="KW-0687">Ribonucleoprotein</keyword>
<keyword id="KW-0689">Ribosomal protein</keyword>
<keyword id="KW-0694">RNA-binding</keyword>
<keyword id="KW-0699">rRNA-binding</keyword>
<keyword id="KW-0820">tRNA-binding</keyword>
<dbReference type="EMBL" id="AM295250">
    <property type="protein sequence ID" value="CAL27117.1"/>
    <property type="molecule type" value="Genomic_DNA"/>
</dbReference>
<dbReference type="RefSeq" id="WP_012664232.1">
    <property type="nucleotide sequence ID" value="NC_012121.1"/>
</dbReference>
<dbReference type="SMR" id="B9DKV5"/>
<dbReference type="GeneID" id="93795133"/>
<dbReference type="KEGG" id="sca:SCA_0204"/>
<dbReference type="eggNOG" id="COG0048">
    <property type="taxonomic scope" value="Bacteria"/>
</dbReference>
<dbReference type="HOGENOM" id="CLU_104295_1_2_9"/>
<dbReference type="OrthoDB" id="9802366at2"/>
<dbReference type="BioCyc" id="SCAR396513:SCA_RS01045-MONOMER"/>
<dbReference type="Proteomes" id="UP000000444">
    <property type="component" value="Chromosome"/>
</dbReference>
<dbReference type="GO" id="GO:0015935">
    <property type="term" value="C:small ribosomal subunit"/>
    <property type="evidence" value="ECO:0007669"/>
    <property type="project" value="InterPro"/>
</dbReference>
<dbReference type="GO" id="GO:0019843">
    <property type="term" value="F:rRNA binding"/>
    <property type="evidence" value="ECO:0007669"/>
    <property type="project" value="UniProtKB-UniRule"/>
</dbReference>
<dbReference type="GO" id="GO:0003735">
    <property type="term" value="F:structural constituent of ribosome"/>
    <property type="evidence" value="ECO:0007669"/>
    <property type="project" value="InterPro"/>
</dbReference>
<dbReference type="GO" id="GO:0000049">
    <property type="term" value="F:tRNA binding"/>
    <property type="evidence" value="ECO:0007669"/>
    <property type="project" value="UniProtKB-UniRule"/>
</dbReference>
<dbReference type="GO" id="GO:0006412">
    <property type="term" value="P:translation"/>
    <property type="evidence" value="ECO:0007669"/>
    <property type="project" value="UniProtKB-UniRule"/>
</dbReference>
<dbReference type="CDD" id="cd03368">
    <property type="entry name" value="Ribosomal_S12"/>
    <property type="match status" value="1"/>
</dbReference>
<dbReference type="FunFam" id="2.40.50.140:FF:000001">
    <property type="entry name" value="30S ribosomal protein S12"/>
    <property type="match status" value="1"/>
</dbReference>
<dbReference type="Gene3D" id="2.40.50.140">
    <property type="entry name" value="Nucleic acid-binding proteins"/>
    <property type="match status" value="1"/>
</dbReference>
<dbReference type="HAMAP" id="MF_00403_B">
    <property type="entry name" value="Ribosomal_uS12_B"/>
    <property type="match status" value="1"/>
</dbReference>
<dbReference type="InterPro" id="IPR012340">
    <property type="entry name" value="NA-bd_OB-fold"/>
</dbReference>
<dbReference type="InterPro" id="IPR006032">
    <property type="entry name" value="Ribosomal_uS12"/>
</dbReference>
<dbReference type="InterPro" id="IPR005679">
    <property type="entry name" value="Ribosomal_uS12_bac"/>
</dbReference>
<dbReference type="NCBIfam" id="TIGR00981">
    <property type="entry name" value="rpsL_bact"/>
    <property type="match status" value="1"/>
</dbReference>
<dbReference type="PANTHER" id="PTHR11652">
    <property type="entry name" value="30S RIBOSOMAL PROTEIN S12 FAMILY MEMBER"/>
    <property type="match status" value="1"/>
</dbReference>
<dbReference type="Pfam" id="PF00164">
    <property type="entry name" value="Ribosom_S12_S23"/>
    <property type="match status" value="1"/>
</dbReference>
<dbReference type="PIRSF" id="PIRSF002133">
    <property type="entry name" value="Ribosomal_S12/S23"/>
    <property type="match status" value="1"/>
</dbReference>
<dbReference type="PRINTS" id="PR01034">
    <property type="entry name" value="RIBOSOMALS12"/>
</dbReference>
<dbReference type="SUPFAM" id="SSF50249">
    <property type="entry name" value="Nucleic acid-binding proteins"/>
    <property type="match status" value="1"/>
</dbReference>
<dbReference type="PROSITE" id="PS00055">
    <property type="entry name" value="RIBOSOMAL_S12"/>
    <property type="match status" value="1"/>
</dbReference>
<protein>
    <recommendedName>
        <fullName evidence="2">Small ribosomal subunit protein uS12</fullName>
    </recommendedName>
    <alternativeName>
        <fullName evidence="4">30S ribosomal protein S12</fullName>
    </alternativeName>
</protein>
<accession>B9DKV5</accession>